<organism>
    <name type="scientific">Burkholderia pseudomallei (strain 1710b)</name>
    <dbReference type="NCBI Taxonomy" id="320372"/>
    <lineage>
        <taxon>Bacteria</taxon>
        <taxon>Pseudomonadati</taxon>
        <taxon>Pseudomonadota</taxon>
        <taxon>Betaproteobacteria</taxon>
        <taxon>Burkholderiales</taxon>
        <taxon>Burkholderiaceae</taxon>
        <taxon>Burkholderia</taxon>
        <taxon>pseudomallei group</taxon>
    </lineage>
</organism>
<evidence type="ECO:0000255" key="1">
    <source>
        <dbReference type="HAMAP-Rule" id="MF_00414"/>
    </source>
</evidence>
<reference key="1">
    <citation type="journal article" date="2010" name="Genome Biol. Evol.">
        <title>Continuing evolution of Burkholderia mallei through genome reduction and large-scale rearrangements.</title>
        <authorList>
            <person name="Losada L."/>
            <person name="Ronning C.M."/>
            <person name="DeShazer D."/>
            <person name="Woods D."/>
            <person name="Fedorova N."/>
            <person name="Kim H.S."/>
            <person name="Shabalina S.A."/>
            <person name="Pearson T.R."/>
            <person name="Brinkac L."/>
            <person name="Tan P."/>
            <person name="Nandi T."/>
            <person name="Crabtree J."/>
            <person name="Badger J."/>
            <person name="Beckstrom-Sternberg S."/>
            <person name="Saqib M."/>
            <person name="Schutzer S.E."/>
            <person name="Keim P."/>
            <person name="Nierman W.C."/>
        </authorList>
    </citation>
    <scope>NUCLEOTIDE SEQUENCE [LARGE SCALE GENOMIC DNA]</scope>
    <source>
        <strain>1710b</strain>
    </source>
</reference>
<accession>Q3JVZ2</accession>
<comment type="function">
    <text evidence="1">Is probably a protein kinase regulator of UbiI activity which is involved in aerobic coenzyme Q (ubiquinone) biosynthesis.</text>
</comment>
<comment type="pathway">
    <text>Cofactor biosynthesis; ubiquinone biosynthesis [regulation].</text>
</comment>
<comment type="subcellular location">
    <subcellularLocation>
        <location evidence="1">Cell inner membrane</location>
        <topology evidence="1">Single-pass membrane protein</topology>
    </subcellularLocation>
</comment>
<comment type="similarity">
    <text evidence="1">Belongs to the ABC1 family. UbiB subfamily.</text>
</comment>
<proteinExistence type="inferred from homology"/>
<feature type="chain" id="PRO_1000123895" description="Probable protein kinase UbiB">
    <location>
        <begin position="1"/>
        <end position="525"/>
    </location>
</feature>
<feature type="transmembrane region" description="Helical" evidence="1">
    <location>
        <begin position="501"/>
        <end position="521"/>
    </location>
</feature>
<feature type="domain" description="Protein kinase" evidence="1">
    <location>
        <begin position="118"/>
        <end position="500"/>
    </location>
</feature>
<feature type="active site" description="Proton acceptor" evidence="1">
    <location>
        <position position="285"/>
    </location>
</feature>
<feature type="binding site" evidence="1">
    <location>
        <begin position="124"/>
        <end position="132"/>
    </location>
    <ligand>
        <name>ATP</name>
        <dbReference type="ChEBI" id="CHEBI:30616"/>
    </ligand>
</feature>
<feature type="binding site" evidence="1">
    <location>
        <position position="150"/>
    </location>
    <ligand>
        <name>ATP</name>
        <dbReference type="ChEBI" id="CHEBI:30616"/>
    </ligand>
</feature>
<protein>
    <recommendedName>
        <fullName evidence="1">Probable protein kinase UbiB</fullName>
        <ecNumber evidence="1">2.7.-.-</ecNumber>
    </recommendedName>
    <alternativeName>
        <fullName evidence="1">Ubiquinone biosynthesis protein UbiB</fullName>
    </alternativeName>
</protein>
<name>UBIB_BURP1</name>
<keyword id="KW-0067">ATP-binding</keyword>
<keyword id="KW-0997">Cell inner membrane</keyword>
<keyword id="KW-1003">Cell membrane</keyword>
<keyword id="KW-0418">Kinase</keyword>
<keyword id="KW-0472">Membrane</keyword>
<keyword id="KW-0547">Nucleotide-binding</keyword>
<keyword id="KW-0808">Transferase</keyword>
<keyword id="KW-0812">Transmembrane</keyword>
<keyword id="KW-1133">Transmembrane helix</keyword>
<keyword id="KW-0831">Ubiquinone biosynthesis</keyword>
<sequence>MRIFRFVKIVFTVIRFGLDEVMLSRIENPRVKLLLRITTIGRRFADPPAVRLRRALESLGPIFVKFGQVLSTRRDLLPVDFANELAKLQDQVPPFDSAVAIAIVEKSLGARIDVLFDEFERVPVASASIAQVHFAKLKQGEHKGKAVAVKVLRPNMLPVIDSDLALMRDIATWAERLWADGRRLKPREVVAEFDKYLHDELDLMREAANGSQLRRNFAGLDLLLVPEMFWDYSTPAVLVMERMTGVPISQVDTLRAAGVDIPKLAREGVEIFFTQVFRDGFFHADMHPGNIQVSLDPKHFGRYIALDFGIVGALSDFDKNYLAQNFLAFFKRDYHRVATLHLESGWVPPDTRVEELESAIRAVCEPYFDRALKDISLGQVLMRLFSTSRRFNVEIQPQLVLLQKTMLNVEGLGRSLDPELDLWKTAKPYLERWMTEQIGLRGWYERFKVEAPQWSKTLPQLPRLVHQALISHHEAPRAISDDLIRQILVEQRRTNRLLQALLVFGLAVGAGAVIARVLIVLAYGG</sequence>
<dbReference type="EC" id="2.7.-.-" evidence="1"/>
<dbReference type="EMBL" id="CP000124">
    <property type="protein sequence ID" value="ABA48640.1"/>
    <property type="molecule type" value="Genomic_DNA"/>
</dbReference>
<dbReference type="RefSeq" id="WP_004189815.1">
    <property type="nucleotide sequence ID" value="NC_007434.1"/>
</dbReference>
<dbReference type="SMR" id="Q3JVZ2"/>
<dbReference type="EnsemblBacteria" id="ABA48640">
    <property type="protein sequence ID" value="ABA48640"/>
    <property type="gene ID" value="BURPS1710b_0848"/>
</dbReference>
<dbReference type="GeneID" id="93059152"/>
<dbReference type="KEGG" id="bpm:BURPS1710b_0848"/>
<dbReference type="HOGENOM" id="CLU_006533_0_0_4"/>
<dbReference type="UniPathway" id="UPA00232"/>
<dbReference type="Proteomes" id="UP000002700">
    <property type="component" value="Chromosome I"/>
</dbReference>
<dbReference type="GO" id="GO:0005886">
    <property type="term" value="C:plasma membrane"/>
    <property type="evidence" value="ECO:0007669"/>
    <property type="project" value="UniProtKB-SubCell"/>
</dbReference>
<dbReference type="GO" id="GO:0005524">
    <property type="term" value="F:ATP binding"/>
    <property type="evidence" value="ECO:0007669"/>
    <property type="project" value="UniProtKB-KW"/>
</dbReference>
<dbReference type="GO" id="GO:0004672">
    <property type="term" value="F:protein kinase activity"/>
    <property type="evidence" value="ECO:0007669"/>
    <property type="project" value="UniProtKB-UniRule"/>
</dbReference>
<dbReference type="GO" id="GO:0010795">
    <property type="term" value="P:regulation of ubiquinone biosynthetic process"/>
    <property type="evidence" value="ECO:0007669"/>
    <property type="project" value="UniProtKB-UniRule"/>
</dbReference>
<dbReference type="GO" id="GO:0006744">
    <property type="term" value="P:ubiquinone biosynthetic process"/>
    <property type="evidence" value="ECO:0007669"/>
    <property type="project" value="UniProtKB-UniPathway"/>
</dbReference>
<dbReference type="CDD" id="cd13972">
    <property type="entry name" value="UbiB"/>
    <property type="match status" value="1"/>
</dbReference>
<dbReference type="HAMAP" id="MF_00414">
    <property type="entry name" value="UbiB"/>
    <property type="match status" value="1"/>
</dbReference>
<dbReference type="InterPro" id="IPR004147">
    <property type="entry name" value="ABC1_dom"/>
</dbReference>
<dbReference type="InterPro" id="IPR011009">
    <property type="entry name" value="Kinase-like_dom_sf"/>
</dbReference>
<dbReference type="InterPro" id="IPR010232">
    <property type="entry name" value="UbiB"/>
</dbReference>
<dbReference type="InterPro" id="IPR045308">
    <property type="entry name" value="UbiB_bact"/>
</dbReference>
<dbReference type="InterPro" id="IPR050154">
    <property type="entry name" value="UbiB_kinase"/>
</dbReference>
<dbReference type="NCBIfam" id="NF003404">
    <property type="entry name" value="PRK04750.1"/>
    <property type="match status" value="1"/>
</dbReference>
<dbReference type="NCBIfam" id="TIGR01982">
    <property type="entry name" value="UbiB"/>
    <property type="match status" value="1"/>
</dbReference>
<dbReference type="PANTHER" id="PTHR10566">
    <property type="entry name" value="CHAPERONE-ACTIVITY OF BC1 COMPLEX CABC1 -RELATED"/>
    <property type="match status" value="1"/>
</dbReference>
<dbReference type="PANTHER" id="PTHR10566:SF113">
    <property type="entry name" value="PROTEIN ACTIVITY OF BC1 COMPLEX KINASE 7, CHLOROPLASTIC"/>
    <property type="match status" value="1"/>
</dbReference>
<dbReference type="Pfam" id="PF03109">
    <property type="entry name" value="ABC1"/>
    <property type="match status" value="1"/>
</dbReference>
<dbReference type="SUPFAM" id="SSF56112">
    <property type="entry name" value="Protein kinase-like (PK-like)"/>
    <property type="match status" value="1"/>
</dbReference>
<gene>
    <name evidence="1" type="primary">ubiB</name>
    <name type="ordered locus">BURPS1710b_0848</name>
</gene>